<name>TXBJ9_LYCSI</name>
<feature type="signal peptide" evidence="2">
    <location>
        <begin position="1"/>
        <end position="20"/>
    </location>
</feature>
<feature type="propeptide" id="PRO_0000401841" evidence="1">
    <location>
        <begin position="21"/>
        <end position="26"/>
    </location>
</feature>
<feature type="chain" id="PRO_0000401842" description="U11-lycotoxin-Ls1a">
    <location>
        <begin position="27"/>
        <end position="77"/>
    </location>
</feature>
<reference key="1">
    <citation type="journal article" date="2010" name="Zoology">
        <title>Transcriptome analysis of the venom glands of the Chinese wolf spider Lycosa singoriensis.</title>
        <authorList>
            <person name="Zhang Y."/>
            <person name="Chen J."/>
            <person name="Tang X."/>
            <person name="Wang F."/>
            <person name="Jiang L."/>
            <person name="Xiong X."/>
            <person name="Wang M."/>
            <person name="Rong M."/>
            <person name="Liu Z."/>
            <person name="Liang S."/>
        </authorList>
    </citation>
    <scope>NUCLEOTIDE SEQUENCE [LARGE SCALE MRNA]</scope>
    <source>
        <tissue>Venom gland</tissue>
    </source>
</reference>
<evidence type="ECO:0000250" key="1"/>
<evidence type="ECO:0000255" key="2"/>
<evidence type="ECO:0000305" key="3"/>
<dbReference type="EMBL" id="EU926095">
    <property type="protein sequence ID" value="ACI41427.1"/>
    <property type="molecule type" value="mRNA"/>
</dbReference>
<dbReference type="EMBL" id="FM864099">
    <property type="protein sequence ID" value="CAS03696.1"/>
    <property type="molecule type" value="mRNA"/>
</dbReference>
<dbReference type="SMR" id="B6DD11"/>
<dbReference type="ArachnoServer" id="AS001035">
    <property type="toxin name" value="U11-lycotoxin-Ls1a"/>
</dbReference>
<dbReference type="GO" id="GO:0005576">
    <property type="term" value="C:extracellular region"/>
    <property type="evidence" value="ECO:0007669"/>
    <property type="project" value="UniProtKB-SubCell"/>
</dbReference>
<dbReference type="GO" id="GO:0090729">
    <property type="term" value="F:toxin activity"/>
    <property type="evidence" value="ECO:0007669"/>
    <property type="project" value="UniProtKB-KW"/>
</dbReference>
<dbReference type="InterPro" id="IPR019553">
    <property type="entry name" value="Spider_toxin_CSTX_knottin"/>
</dbReference>
<dbReference type="Pfam" id="PF10530">
    <property type="entry name" value="Toxin_35"/>
    <property type="match status" value="1"/>
</dbReference>
<proteinExistence type="evidence at transcript level"/>
<organism>
    <name type="scientific">Lycosa singoriensis</name>
    <name type="common">Wolf spider</name>
    <name type="synonym">Aranea singoriensis</name>
    <dbReference type="NCBI Taxonomy" id="434756"/>
    <lineage>
        <taxon>Eukaryota</taxon>
        <taxon>Metazoa</taxon>
        <taxon>Ecdysozoa</taxon>
        <taxon>Arthropoda</taxon>
        <taxon>Chelicerata</taxon>
        <taxon>Arachnida</taxon>
        <taxon>Araneae</taxon>
        <taxon>Araneomorphae</taxon>
        <taxon>Entelegynae</taxon>
        <taxon>Lycosoidea</taxon>
        <taxon>Lycosidae</taxon>
        <taxon>Lycosa</taxon>
    </lineage>
</organism>
<protein>
    <recommendedName>
        <fullName>U11-lycotoxin-Ls1a</fullName>
    </recommendedName>
    <alternativeName>
        <fullName>Toxin-like structure LSTX-J9</fullName>
    </alternativeName>
</protein>
<keyword id="KW-1015">Disulfide bond</keyword>
<keyword id="KW-0964">Secreted</keyword>
<keyword id="KW-0732">Signal</keyword>
<keyword id="KW-0800">Toxin</keyword>
<sequence>MKLIILTGLVLFAIVSFIEAEEETGRACILLYGECTKASGSCCSNLICDCYRKLKKGVQIARQCFCLEKDVVYKKHI</sequence>
<accession>B6DD11</accession>
<comment type="subcellular location">
    <subcellularLocation>
        <location evidence="1">Secreted</location>
    </subcellularLocation>
</comment>
<comment type="tissue specificity">
    <text>Expressed by the venom gland.</text>
</comment>
<comment type="PTM">
    <text evidence="1">Contains 4 disulfide bonds.</text>
</comment>
<comment type="similarity">
    <text evidence="3">Belongs to the neurotoxin 19 (CSTX) family. 10 (U11-Lctx) subfamily.</text>
</comment>